<gene>
    <name evidence="1" type="primary">atpF</name>
</gene>
<organism>
    <name type="scientific">Olimarabidopsis pumila</name>
    <name type="common">Dwarf rocket</name>
    <name type="synonym">Arabidopsis griffithiana</name>
    <dbReference type="NCBI Taxonomy" id="74718"/>
    <lineage>
        <taxon>Eukaryota</taxon>
        <taxon>Viridiplantae</taxon>
        <taxon>Streptophyta</taxon>
        <taxon>Embryophyta</taxon>
        <taxon>Tracheophyta</taxon>
        <taxon>Spermatophyta</taxon>
        <taxon>Magnoliopsida</taxon>
        <taxon>eudicotyledons</taxon>
        <taxon>Gunneridae</taxon>
        <taxon>Pentapetalae</taxon>
        <taxon>rosids</taxon>
        <taxon>malvids</taxon>
        <taxon>Brassicales</taxon>
        <taxon>Brassicaceae</taxon>
        <taxon>Alyssopsideae</taxon>
        <taxon>Olimarabidopsis</taxon>
    </lineage>
</organism>
<name>ATPF_OLIPU</name>
<proteinExistence type="inferred from homology"/>
<keyword id="KW-0066">ATP synthesis</keyword>
<keyword id="KW-0138">CF(0)</keyword>
<keyword id="KW-0150">Chloroplast</keyword>
<keyword id="KW-0375">Hydrogen ion transport</keyword>
<keyword id="KW-0406">Ion transport</keyword>
<keyword id="KW-0472">Membrane</keyword>
<keyword id="KW-0934">Plastid</keyword>
<keyword id="KW-0793">Thylakoid</keyword>
<keyword id="KW-0812">Transmembrane</keyword>
<keyword id="KW-1133">Transmembrane helix</keyword>
<keyword id="KW-0813">Transport</keyword>
<feature type="chain" id="PRO_0000368963" description="ATP synthase subunit b, chloroplastic">
    <location>
        <begin position="1"/>
        <end position="184"/>
    </location>
</feature>
<feature type="transmembrane region" description="Helical" evidence="1">
    <location>
        <begin position="27"/>
        <end position="49"/>
    </location>
</feature>
<evidence type="ECO:0000255" key="1">
    <source>
        <dbReference type="HAMAP-Rule" id="MF_01398"/>
    </source>
</evidence>
<accession>A4QJR9</accession>
<sequence length="184" mass="21015">MKTLTDSFVYLGHWPSAGSFGFNTDILATNPINLSVVFGVLIFFGKGVLNDLLDNRKQRILNTIRNSEELREGAIQQLENALARLRKVETEADQFRVNGYSEIEREKLNLINSTYKTLKQLENYKNETILFEQQRTINQVRERVFQQALQGAIGTLNSCLSNELHLRTINANIGMFGTMKEITD</sequence>
<geneLocation type="chloroplast"/>
<comment type="function">
    <text evidence="1">F(1)F(0) ATP synthase produces ATP from ADP in the presence of a proton or sodium gradient. F-type ATPases consist of two structural domains, F(1) containing the extramembraneous catalytic core and F(0) containing the membrane proton channel, linked together by a central stalk and a peripheral stalk. During catalysis, ATP synthesis in the catalytic domain of F(1) is coupled via a rotary mechanism of the central stalk subunits to proton translocation.</text>
</comment>
<comment type="function">
    <text evidence="1">Component of the F(0) channel, it forms part of the peripheral stalk, linking F(1) to F(0).</text>
</comment>
<comment type="subunit">
    <text evidence="1">F-type ATPases have 2 components, F(1) - the catalytic core - and F(0) - the membrane proton channel. F(1) has five subunits: alpha(3), beta(3), gamma(1), delta(1), epsilon(1). F(0) has four main subunits: a(1), b(1), b'(1) and c(10-14). The alpha and beta chains form an alternating ring which encloses part of the gamma chain. F(1) is attached to F(0) by a central stalk formed by the gamma and epsilon chains, while a peripheral stalk is formed by the delta, b and b' chains.</text>
</comment>
<comment type="subcellular location">
    <subcellularLocation>
        <location evidence="1">Plastid</location>
        <location evidence="1">Chloroplast thylakoid membrane</location>
        <topology evidence="1">Single-pass membrane protein</topology>
    </subcellularLocation>
</comment>
<comment type="miscellaneous">
    <text>In plastids the F-type ATPase is also known as CF(1)CF(0).</text>
</comment>
<comment type="similarity">
    <text evidence="1">Belongs to the ATPase B chain family.</text>
</comment>
<dbReference type="EMBL" id="AP009368">
    <property type="protein sequence ID" value="BAF49925.1"/>
    <property type="molecule type" value="Genomic_DNA"/>
</dbReference>
<dbReference type="RefSeq" id="YP_001123101.1">
    <property type="nucleotide sequence ID" value="NC_009267.1"/>
</dbReference>
<dbReference type="SMR" id="A4QJR9"/>
<dbReference type="GeneID" id="4962432"/>
<dbReference type="GO" id="GO:0009535">
    <property type="term" value="C:chloroplast thylakoid membrane"/>
    <property type="evidence" value="ECO:0007669"/>
    <property type="project" value="UniProtKB-SubCell"/>
</dbReference>
<dbReference type="GO" id="GO:0045259">
    <property type="term" value="C:proton-transporting ATP synthase complex"/>
    <property type="evidence" value="ECO:0007669"/>
    <property type="project" value="UniProtKB-KW"/>
</dbReference>
<dbReference type="GO" id="GO:0046933">
    <property type="term" value="F:proton-transporting ATP synthase activity, rotational mechanism"/>
    <property type="evidence" value="ECO:0007669"/>
    <property type="project" value="UniProtKB-UniRule"/>
</dbReference>
<dbReference type="CDD" id="cd06503">
    <property type="entry name" value="ATP-synt_Fo_b"/>
    <property type="match status" value="1"/>
</dbReference>
<dbReference type="HAMAP" id="MF_01398">
    <property type="entry name" value="ATP_synth_b_bprime"/>
    <property type="match status" value="1"/>
</dbReference>
<dbReference type="InterPro" id="IPR002146">
    <property type="entry name" value="ATP_synth_b/b'su_bac/chlpt"/>
</dbReference>
<dbReference type="PANTHER" id="PTHR34264">
    <property type="entry name" value="ATP SYNTHASE SUBUNIT B, CHLOROPLASTIC"/>
    <property type="match status" value="1"/>
</dbReference>
<dbReference type="PANTHER" id="PTHR34264:SF3">
    <property type="entry name" value="ATP SYNTHASE SUBUNIT B, CHLOROPLASTIC"/>
    <property type="match status" value="1"/>
</dbReference>
<dbReference type="Pfam" id="PF00430">
    <property type="entry name" value="ATP-synt_B"/>
    <property type="match status" value="1"/>
</dbReference>
<protein>
    <recommendedName>
        <fullName evidence="1">ATP synthase subunit b, chloroplastic</fullName>
    </recommendedName>
    <alternativeName>
        <fullName evidence="1">ATP synthase F(0) sector subunit b</fullName>
    </alternativeName>
    <alternativeName>
        <fullName evidence="1">ATPase subunit I</fullName>
    </alternativeName>
</protein>
<reference key="1">
    <citation type="submission" date="2007-03" db="EMBL/GenBank/DDBJ databases">
        <title>Sequence analysis of Arabidopsis pumila JS2 chloroplast DNA.</title>
        <authorList>
            <person name="Hosouchi T."/>
            <person name="Tsuruoka H."/>
            <person name="Kotani H."/>
        </authorList>
    </citation>
    <scope>NUCLEOTIDE SEQUENCE [LARGE SCALE GENOMIC DNA]</scope>
</reference>